<accession>C0PZV7</accession>
<organism>
    <name type="scientific">Salmonella paratyphi C (strain RKS4594)</name>
    <dbReference type="NCBI Taxonomy" id="476213"/>
    <lineage>
        <taxon>Bacteria</taxon>
        <taxon>Pseudomonadati</taxon>
        <taxon>Pseudomonadota</taxon>
        <taxon>Gammaproteobacteria</taxon>
        <taxon>Enterobacterales</taxon>
        <taxon>Enterobacteriaceae</taxon>
        <taxon>Salmonella</taxon>
    </lineage>
</organism>
<name>RL17_SALPC</name>
<sequence length="127" mass="14395">MRHRKSGRQLNRNSSHRQAMFRNMAGSLVRHEIIKTTLPKAKELRRVVEPLITLAKTDSVANRRLAFARTRDNEIVAKLFNELGPRFASRAGGYTRILKCGFRAGDNAPMAYIELVDRSEKTEAAAE</sequence>
<dbReference type="EMBL" id="CP000857">
    <property type="protein sequence ID" value="ACN47567.1"/>
    <property type="molecule type" value="Genomic_DNA"/>
</dbReference>
<dbReference type="RefSeq" id="WP_001216370.1">
    <property type="nucleotide sequence ID" value="NC_012125.1"/>
</dbReference>
<dbReference type="SMR" id="C0PZV7"/>
<dbReference type="GeneID" id="89546962"/>
<dbReference type="KEGG" id="sei:SPC_3483"/>
<dbReference type="HOGENOM" id="CLU_074407_2_0_6"/>
<dbReference type="Proteomes" id="UP000001599">
    <property type="component" value="Chromosome"/>
</dbReference>
<dbReference type="GO" id="GO:0022625">
    <property type="term" value="C:cytosolic large ribosomal subunit"/>
    <property type="evidence" value="ECO:0007669"/>
    <property type="project" value="TreeGrafter"/>
</dbReference>
<dbReference type="GO" id="GO:0003735">
    <property type="term" value="F:structural constituent of ribosome"/>
    <property type="evidence" value="ECO:0007669"/>
    <property type="project" value="InterPro"/>
</dbReference>
<dbReference type="GO" id="GO:0006412">
    <property type="term" value="P:translation"/>
    <property type="evidence" value="ECO:0007669"/>
    <property type="project" value="UniProtKB-UniRule"/>
</dbReference>
<dbReference type="FunFam" id="3.90.1030.10:FF:000001">
    <property type="entry name" value="50S ribosomal protein L17"/>
    <property type="match status" value="1"/>
</dbReference>
<dbReference type="Gene3D" id="3.90.1030.10">
    <property type="entry name" value="Ribosomal protein L17"/>
    <property type="match status" value="1"/>
</dbReference>
<dbReference type="HAMAP" id="MF_01368">
    <property type="entry name" value="Ribosomal_bL17"/>
    <property type="match status" value="1"/>
</dbReference>
<dbReference type="InterPro" id="IPR000456">
    <property type="entry name" value="Ribosomal_bL17"/>
</dbReference>
<dbReference type="InterPro" id="IPR047859">
    <property type="entry name" value="Ribosomal_bL17_CS"/>
</dbReference>
<dbReference type="InterPro" id="IPR036373">
    <property type="entry name" value="Ribosomal_bL17_sf"/>
</dbReference>
<dbReference type="NCBIfam" id="TIGR00059">
    <property type="entry name" value="L17"/>
    <property type="match status" value="1"/>
</dbReference>
<dbReference type="PANTHER" id="PTHR14413:SF16">
    <property type="entry name" value="LARGE RIBOSOMAL SUBUNIT PROTEIN BL17M"/>
    <property type="match status" value="1"/>
</dbReference>
<dbReference type="PANTHER" id="PTHR14413">
    <property type="entry name" value="RIBOSOMAL PROTEIN L17"/>
    <property type="match status" value="1"/>
</dbReference>
<dbReference type="Pfam" id="PF01196">
    <property type="entry name" value="Ribosomal_L17"/>
    <property type="match status" value="1"/>
</dbReference>
<dbReference type="SUPFAM" id="SSF64263">
    <property type="entry name" value="Prokaryotic ribosomal protein L17"/>
    <property type="match status" value="1"/>
</dbReference>
<dbReference type="PROSITE" id="PS01167">
    <property type="entry name" value="RIBOSOMAL_L17"/>
    <property type="match status" value="1"/>
</dbReference>
<feature type="chain" id="PRO_1000184041" description="Large ribosomal subunit protein bL17">
    <location>
        <begin position="1"/>
        <end position="127"/>
    </location>
</feature>
<reference key="1">
    <citation type="journal article" date="2009" name="PLoS ONE">
        <title>Salmonella paratyphi C: genetic divergence from Salmonella choleraesuis and pathogenic convergence with Salmonella typhi.</title>
        <authorList>
            <person name="Liu W.-Q."/>
            <person name="Feng Y."/>
            <person name="Wang Y."/>
            <person name="Zou Q.-H."/>
            <person name="Chen F."/>
            <person name="Guo J.-T."/>
            <person name="Peng Y.-H."/>
            <person name="Jin Y."/>
            <person name="Li Y.-G."/>
            <person name="Hu S.-N."/>
            <person name="Johnston R.N."/>
            <person name="Liu G.-R."/>
            <person name="Liu S.-L."/>
        </authorList>
    </citation>
    <scope>NUCLEOTIDE SEQUENCE [LARGE SCALE GENOMIC DNA]</scope>
    <source>
        <strain>RKS4594</strain>
    </source>
</reference>
<gene>
    <name evidence="1" type="primary">rplQ</name>
    <name type="ordered locus">SPC_3483</name>
</gene>
<evidence type="ECO:0000255" key="1">
    <source>
        <dbReference type="HAMAP-Rule" id="MF_01368"/>
    </source>
</evidence>
<evidence type="ECO:0000305" key="2"/>
<protein>
    <recommendedName>
        <fullName evidence="1">Large ribosomal subunit protein bL17</fullName>
    </recommendedName>
    <alternativeName>
        <fullName evidence="2">50S ribosomal protein L17</fullName>
    </alternativeName>
</protein>
<proteinExistence type="inferred from homology"/>
<comment type="subunit">
    <text evidence="1">Part of the 50S ribosomal subunit. Contacts protein L32.</text>
</comment>
<comment type="similarity">
    <text evidence="1">Belongs to the bacterial ribosomal protein bL17 family.</text>
</comment>
<keyword id="KW-0687">Ribonucleoprotein</keyword>
<keyword id="KW-0689">Ribosomal protein</keyword>